<dbReference type="EMBL" id="KN275958">
    <property type="protein sequence ID" value="EEH46235.1"/>
    <property type="molecule type" value="Genomic_DNA"/>
</dbReference>
<dbReference type="RefSeq" id="XP_010757788.1">
    <property type="nucleotide sequence ID" value="XM_010759486.1"/>
</dbReference>
<dbReference type="STRING" id="502780.C1G2L9"/>
<dbReference type="GeneID" id="22581873"/>
<dbReference type="KEGG" id="pbn:PADG_02385"/>
<dbReference type="VEuPathDB" id="FungiDB:PADG_02385"/>
<dbReference type="eggNOG" id="KOG4020">
    <property type="taxonomic scope" value="Eukaryota"/>
</dbReference>
<dbReference type="HOGENOM" id="CLU_067152_1_0_1"/>
<dbReference type="InParanoid" id="C1G2L9"/>
<dbReference type="OMA" id="DFVMPVT"/>
<dbReference type="OrthoDB" id="34486at33183"/>
<dbReference type="Proteomes" id="UP000001628">
    <property type="component" value="Unassembled WGS sequence"/>
</dbReference>
<dbReference type="GO" id="GO:0005758">
    <property type="term" value="C:mitochondrial intermembrane space"/>
    <property type="evidence" value="ECO:0007669"/>
    <property type="project" value="UniProtKB-SubCell"/>
</dbReference>
<dbReference type="GO" id="GO:0051537">
    <property type="term" value="F:2 iron, 2 sulfur cluster binding"/>
    <property type="evidence" value="ECO:0007669"/>
    <property type="project" value="UniProtKB-UniRule"/>
</dbReference>
<dbReference type="GO" id="GO:0051539">
    <property type="term" value="F:4 iron, 4 sulfur cluster binding"/>
    <property type="evidence" value="ECO:0007669"/>
    <property type="project" value="UniProtKB-KW"/>
</dbReference>
<dbReference type="GO" id="GO:0009055">
    <property type="term" value="F:electron transfer activity"/>
    <property type="evidence" value="ECO:0007669"/>
    <property type="project" value="UniProtKB-UniRule"/>
</dbReference>
<dbReference type="GO" id="GO:0046872">
    <property type="term" value="F:metal ion binding"/>
    <property type="evidence" value="ECO:0007669"/>
    <property type="project" value="UniProtKB-KW"/>
</dbReference>
<dbReference type="GO" id="GO:0016226">
    <property type="term" value="P:iron-sulfur cluster assembly"/>
    <property type="evidence" value="ECO:0007669"/>
    <property type="project" value="UniProtKB-UniRule"/>
</dbReference>
<dbReference type="Gene3D" id="3.40.50.11000">
    <property type="entry name" value="Fe-S cluster assembly protein Dre2, N-terminal domain"/>
    <property type="match status" value="1"/>
</dbReference>
<dbReference type="HAMAP" id="MF_03115">
    <property type="entry name" value="Anamorsin"/>
    <property type="match status" value="1"/>
</dbReference>
<dbReference type="InterPro" id="IPR007785">
    <property type="entry name" value="Anamorsin"/>
</dbReference>
<dbReference type="InterPro" id="IPR046408">
    <property type="entry name" value="CIAPIN1"/>
</dbReference>
<dbReference type="InterPro" id="IPR031838">
    <property type="entry name" value="Dre2_N"/>
</dbReference>
<dbReference type="PANTHER" id="PTHR13273">
    <property type="entry name" value="ANAMORSIN"/>
    <property type="match status" value="1"/>
</dbReference>
<dbReference type="PANTHER" id="PTHR13273:SF14">
    <property type="entry name" value="ANAMORSIN"/>
    <property type="match status" value="1"/>
</dbReference>
<dbReference type="Pfam" id="PF05093">
    <property type="entry name" value="CIAPIN1"/>
    <property type="match status" value="1"/>
</dbReference>
<dbReference type="Pfam" id="PF16803">
    <property type="entry name" value="DRE2_N"/>
    <property type="match status" value="1"/>
</dbReference>
<comment type="function">
    <text evidence="1">Component of the cytosolic iron-sulfur (Fe-S) protein assembly (CIA) machinery required for the maturation of extramitochondrial Fe-S proteins. Part of an electron transfer chain functioning in an early step of cytosolic Fe-S biogenesis, facilitating the de novo assembly of a [4Fe-4S] cluster on the scaffold complex CFD1-NBP35. Electrons are transferred to DRE2 from NADPH via the FAD- and FMN-containing protein TAH18. TAH18-DRE2 are also required for the assembly of the diferric tyrosyl radical cofactor of ribonucleotide reductase (RNR), probably by providing electrons for reduction during radical cofactor maturation in the catalytic small subunit RNR2.</text>
</comment>
<comment type="cofactor">
    <cofactor evidence="1">
        <name>[2Fe-2S] cluster</name>
        <dbReference type="ChEBI" id="CHEBI:190135"/>
    </cofactor>
</comment>
<comment type="cofactor">
    <cofactor evidence="1">
        <name>[4Fe-4S] cluster</name>
        <dbReference type="ChEBI" id="CHEBI:49883"/>
    </cofactor>
</comment>
<comment type="subunit">
    <text evidence="1">Monomer. Interacts with TAH18. Interacts with MIA40.</text>
</comment>
<comment type="subcellular location">
    <subcellularLocation>
        <location evidence="1">Cytoplasm</location>
    </subcellularLocation>
    <subcellularLocation>
        <location evidence="1">Mitochondrion intermembrane space</location>
    </subcellularLocation>
</comment>
<comment type="domain">
    <text evidence="1">The C-terminal domain binds 2 Fe-S clusters but is otherwise mostly in an intrinsically disordered conformation.</text>
</comment>
<comment type="domain">
    <text evidence="1">The N-terminal domain has structural similarity with S-adenosyl-L-methionine-dependent methyltransferases, but does not bind S-adenosyl-L-methionine. It is required for correct assembly of the 2 Fe-S clusters.</text>
</comment>
<comment type="domain">
    <text evidence="1">The twin Cx2C motifs are involved in the recognition by the mitochondrial MIA40-ERV1 disulfide relay system. The formation of 2 disulfide bonds in the Cx2C motifs through dithiol/disulfide exchange reactions effectively traps the protein in the mitochondrial intermembrane space.</text>
</comment>
<comment type="similarity">
    <text evidence="1">Belongs to the anamorsin family.</text>
</comment>
<sequence length="381" mass="40037">MPPSQTPAQGSGRFLLLSPPSLSSHPEKLNAILGLHARESTDLQMLDRLALGLVSLPESTYDVVLLLTGADNTLAETYRLVSRGVLQGVVNSLKPGGKLRNRDNQIWGSGSDSAAGLGSSDGDGGGGEKMSSSEQAFRNEAILAGLVFDDRGELAKPDFGAQQAVPLKLGRKKNLGESAFGNGAVELPASNGVRVTTGATSSTTTTTTTTAAAAAATAATPTTTTTTTINSSTPSGVGFIDFSDDFGVPMVEETQDSDEELIDEEELLGEYDMGRHIVQPPECRPKAGKRRRACKDCTCGLSQKLEAEDRAKRANADKALETLKLRTNDLAEVDFTVQGKVGSCGNCALGDAFRCDGCPYIGLPAFKPGEEVRLLNNDVQL</sequence>
<reference key="1">
    <citation type="journal article" date="2011" name="PLoS Genet.">
        <title>Comparative genomic analysis of human fungal pathogens causing paracoccidioidomycosis.</title>
        <authorList>
            <person name="Desjardins C.A."/>
            <person name="Champion M.D."/>
            <person name="Holder J.W."/>
            <person name="Muszewska A."/>
            <person name="Goldberg J."/>
            <person name="Bailao A.M."/>
            <person name="Brigido M.M."/>
            <person name="Ferreira M.E."/>
            <person name="Garcia A.M."/>
            <person name="Grynberg M."/>
            <person name="Gujja S."/>
            <person name="Heiman D.I."/>
            <person name="Henn M.R."/>
            <person name="Kodira C.D."/>
            <person name="Leon-Narvaez H."/>
            <person name="Longo L.V.G."/>
            <person name="Ma L.-J."/>
            <person name="Malavazi I."/>
            <person name="Matsuo A.L."/>
            <person name="Morais F.V."/>
            <person name="Pereira M."/>
            <person name="Rodriguez-Brito S."/>
            <person name="Sakthikumar S."/>
            <person name="Salem-Izacc S.M."/>
            <person name="Sykes S.M."/>
            <person name="Teixeira M.M."/>
            <person name="Vallejo M.C."/>
            <person name="Walter M.E."/>
            <person name="Yandava C."/>
            <person name="Young S."/>
            <person name="Zeng Q."/>
            <person name="Zucker J."/>
            <person name="Felipe M.S."/>
            <person name="Goldman G.H."/>
            <person name="Haas B.J."/>
            <person name="McEwen J.G."/>
            <person name="Nino-Vega G."/>
            <person name="Puccia R."/>
            <person name="San-Blas G."/>
            <person name="Soares C.M."/>
            <person name="Birren B.W."/>
            <person name="Cuomo C.A."/>
        </authorList>
    </citation>
    <scope>NUCLEOTIDE SEQUENCE [LARGE SCALE GENOMIC DNA]</scope>
    <source>
        <strain>Pb18</strain>
    </source>
</reference>
<proteinExistence type="inferred from homology"/>
<accession>C1G2L9</accession>
<name>DRE2_PARBD</name>
<feature type="chain" id="PRO_0000392397" description="Fe-S cluster assembly protein DRE2">
    <location>
        <begin position="1"/>
        <end position="381"/>
    </location>
</feature>
<feature type="region of interest" description="N-terminal SAM-like domain" evidence="1">
    <location>
        <begin position="8"/>
        <end position="165"/>
    </location>
</feature>
<feature type="region of interest" description="Disordered" evidence="2">
    <location>
        <begin position="100"/>
        <end position="134"/>
    </location>
</feature>
<feature type="region of interest" description="Linker" evidence="1">
    <location>
        <begin position="166"/>
        <end position="273"/>
    </location>
</feature>
<feature type="region of interest" description="Fe-S binding site A" evidence="1">
    <location>
        <begin position="283"/>
        <end position="299"/>
    </location>
</feature>
<feature type="region of interest" description="Fe-S binding site B" evidence="1">
    <location>
        <begin position="344"/>
        <end position="358"/>
    </location>
</feature>
<feature type="short sequence motif" description="Cx2C motif 1" evidence="1">
    <location>
        <begin position="344"/>
        <end position="347"/>
    </location>
</feature>
<feature type="short sequence motif" description="Cx2C motif 2" evidence="1">
    <location>
        <begin position="355"/>
        <end position="358"/>
    </location>
</feature>
<feature type="compositionally biased region" description="Low complexity" evidence="2">
    <location>
        <begin position="108"/>
        <end position="118"/>
    </location>
</feature>
<feature type="compositionally biased region" description="Gly residues" evidence="2">
    <location>
        <begin position="119"/>
        <end position="128"/>
    </location>
</feature>
<feature type="binding site" evidence="1">
    <location>
        <position position="283"/>
    </location>
    <ligand>
        <name>[2Fe-2S] cluster</name>
        <dbReference type="ChEBI" id="CHEBI:190135"/>
    </ligand>
</feature>
<feature type="binding site" evidence="1">
    <location>
        <position position="294"/>
    </location>
    <ligand>
        <name>[2Fe-2S] cluster</name>
        <dbReference type="ChEBI" id="CHEBI:190135"/>
    </ligand>
</feature>
<feature type="binding site" evidence="1">
    <location>
        <position position="297"/>
    </location>
    <ligand>
        <name>[2Fe-2S] cluster</name>
        <dbReference type="ChEBI" id="CHEBI:190135"/>
    </ligand>
</feature>
<feature type="binding site" evidence="1">
    <location>
        <position position="299"/>
    </location>
    <ligand>
        <name>[2Fe-2S] cluster</name>
        <dbReference type="ChEBI" id="CHEBI:190135"/>
    </ligand>
</feature>
<feature type="binding site" evidence="1">
    <location>
        <position position="344"/>
    </location>
    <ligand>
        <name>[4Fe-4S] cluster</name>
        <dbReference type="ChEBI" id="CHEBI:49883"/>
    </ligand>
</feature>
<feature type="binding site" evidence="1">
    <location>
        <position position="347"/>
    </location>
    <ligand>
        <name>[4Fe-4S] cluster</name>
        <dbReference type="ChEBI" id="CHEBI:49883"/>
    </ligand>
</feature>
<feature type="binding site" evidence="1">
    <location>
        <position position="355"/>
    </location>
    <ligand>
        <name>[4Fe-4S] cluster</name>
        <dbReference type="ChEBI" id="CHEBI:49883"/>
    </ligand>
</feature>
<feature type="binding site" evidence="1">
    <location>
        <position position="358"/>
    </location>
    <ligand>
        <name>[4Fe-4S] cluster</name>
        <dbReference type="ChEBI" id="CHEBI:49883"/>
    </ligand>
</feature>
<organism>
    <name type="scientific">Paracoccidioides brasiliensis (strain Pb18)</name>
    <dbReference type="NCBI Taxonomy" id="502780"/>
    <lineage>
        <taxon>Eukaryota</taxon>
        <taxon>Fungi</taxon>
        <taxon>Dikarya</taxon>
        <taxon>Ascomycota</taxon>
        <taxon>Pezizomycotina</taxon>
        <taxon>Eurotiomycetes</taxon>
        <taxon>Eurotiomycetidae</taxon>
        <taxon>Onygenales</taxon>
        <taxon>Ajellomycetaceae</taxon>
        <taxon>Paracoccidioides</taxon>
    </lineage>
</organism>
<keyword id="KW-0001">2Fe-2S</keyword>
<keyword id="KW-0004">4Fe-4S</keyword>
<keyword id="KW-0963">Cytoplasm</keyword>
<keyword id="KW-0408">Iron</keyword>
<keyword id="KW-0411">Iron-sulfur</keyword>
<keyword id="KW-0479">Metal-binding</keyword>
<keyword id="KW-0496">Mitochondrion</keyword>
<keyword id="KW-1185">Reference proteome</keyword>
<evidence type="ECO:0000255" key="1">
    <source>
        <dbReference type="HAMAP-Rule" id="MF_03115"/>
    </source>
</evidence>
<evidence type="ECO:0000256" key="2">
    <source>
        <dbReference type="SAM" id="MobiDB-lite"/>
    </source>
</evidence>
<protein>
    <recommendedName>
        <fullName evidence="1">Fe-S cluster assembly protein DRE2</fullName>
    </recommendedName>
    <alternativeName>
        <fullName evidence="1">Anamorsin homolog</fullName>
    </alternativeName>
</protein>
<gene>
    <name evidence="1" type="primary">DRE2</name>
    <name type="ORF">PADG_02385</name>
</gene>